<feature type="chain" id="PRO_1000004170" description="Large ribosomal subunit protein bL33">
    <location>
        <begin position="1"/>
        <end position="56"/>
    </location>
</feature>
<sequence length="56" mass="6563">MAAKGAREKIRLVSTAETGHFYTTDKNKRNMPEKMEIKKFDPVVRKHVIYKEAKIK</sequence>
<proteinExistence type="inferred from homology"/>
<protein>
    <recommendedName>
        <fullName evidence="1">Large ribosomal subunit protein bL33</fullName>
    </recommendedName>
    <alternativeName>
        <fullName evidence="2">50S ribosomal protein L33</fullName>
    </alternativeName>
</protein>
<evidence type="ECO:0000255" key="1">
    <source>
        <dbReference type="HAMAP-Rule" id="MF_00294"/>
    </source>
</evidence>
<evidence type="ECO:0000305" key="2"/>
<name>RL33_HAEI8</name>
<dbReference type="EMBL" id="CP000057">
    <property type="protein sequence ID" value="AAX87990.1"/>
    <property type="molecule type" value="Genomic_DNA"/>
</dbReference>
<dbReference type="RefSeq" id="WP_005613503.1">
    <property type="nucleotide sequence ID" value="NC_007146.2"/>
</dbReference>
<dbReference type="SMR" id="Q4QLV7"/>
<dbReference type="GeneID" id="93297180"/>
<dbReference type="KEGG" id="hit:NTHI1123"/>
<dbReference type="HOGENOM" id="CLU_190949_1_1_6"/>
<dbReference type="Proteomes" id="UP000002525">
    <property type="component" value="Chromosome"/>
</dbReference>
<dbReference type="GO" id="GO:0022625">
    <property type="term" value="C:cytosolic large ribosomal subunit"/>
    <property type="evidence" value="ECO:0007669"/>
    <property type="project" value="TreeGrafter"/>
</dbReference>
<dbReference type="GO" id="GO:0003735">
    <property type="term" value="F:structural constituent of ribosome"/>
    <property type="evidence" value="ECO:0007669"/>
    <property type="project" value="InterPro"/>
</dbReference>
<dbReference type="GO" id="GO:0006412">
    <property type="term" value="P:translation"/>
    <property type="evidence" value="ECO:0007669"/>
    <property type="project" value="UniProtKB-UniRule"/>
</dbReference>
<dbReference type="FunFam" id="2.20.28.120:FF:000001">
    <property type="entry name" value="50S ribosomal protein L33"/>
    <property type="match status" value="1"/>
</dbReference>
<dbReference type="Gene3D" id="2.20.28.120">
    <property type="entry name" value="Ribosomal protein L33"/>
    <property type="match status" value="1"/>
</dbReference>
<dbReference type="HAMAP" id="MF_00294">
    <property type="entry name" value="Ribosomal_bL33"/>
    <property type="match status" value="1"/>
</dbReference>
<dbReference type="InterPro" id="IPR001705">
    <property type="entry name" value="Ribosomal_bL33"/>
</dbReference>
<dbReference type="InterPro" id="IPR018264">
    <property type="entry name" value="Ribosomal_bL33_CS"/>
</dbReference>
<dbReference type="InterPro" id="IPR038584">
    <property type="entry name" value="Ribosomal_bL33_sf"/>
</dbReference>
<dbReference type="InterPro" id="IPR011332">
    <property type="entry name" value="Ribosomal_zn-bd"/>
</dbReference>
<dbReference type="NCBIfam" id="NF001860">
    <property type="entry name" value="PRK00595.1"/>
    <property type="match status" value="1"/>
</dbReference>
<dbReference type="NCBIfam" id="TIGR01023">
    <property type="entry name" value="rpmG_bact"/>
    <property type="match status" value="1"/>
</dbReference>
<dbReference type="PANTHER" id="PTHR15238">
    <property type="entry name" value="54S RIBOSOMAL PROTEIN L39, MITOCHONDRIAL"/>
    <property type="match status" value="1"/>
</dbReference>
<dbReference type="PANTHER" id="PTHR15238:SF1">
    <property type="entry name" value="LARGE RIBOSOMAL SUBUNIT PROTEIN BL33M"/>
    <property type="match status" value="1"/>
</dbReference>
<dbReference type="Pfam" id="PF00471">
    <property type="entry name" value="Ribosomal_L33"/>
    <property type="match status" value="1"/>
</dbReference>
<dbReference type="SUPFAM" id="SSF57829">
    <property type="entry name" value="Zn-binding ribosomal proteins"/>
    <property type="match status" value="1"/>
</dbReference>
<dbReference type="PROSITE" id="PS00582">
    <property type="entry name" value="RIBOSOMAL_L33"/>
    <property type="match status" value="1"/>
</dbReference>
<comment type="similarity">
    <text evidence="1">Belongs to the bacterial ribosomal protein bL33 family.</text>
</comment>
<reference key="1">
    <citation type="journal article" date="2005" name="J. Bacteriol.">
        <title>Genomic sequence of an otitis media isolate of nontypeable Haemophilus influenzae: comparative study with H. influenzae serotype d, strain KW20.</title>
        <authorList>
            <person name="Harrison A."/>
            <person name="Dyer D.W."/>
            <person name="Gillaspy A."/>
            <person name="Ray W.C."/>
            <person name="Mungur R."/>
            <person name="Carson M.B."/>
            <person name="Zhong H."/>
            <person name="Gipson J."/>
            <person name="Gipson M."/>
            <person name="Johnson L.S."/>
            <person name="Lewis L."/>
            <person name="Bakaletz L.O."/>
            <person name="Munson R.S. Jr."/>
        </authorList>
    </citation>
    <scope>NUCLEOTIDE SEQUENCE [LARGE SCALE GENOMIC DNA]</scope>
    <source>
        <strain>86-028NP</strain>
    </source>
</reference>
<gene>
    <name evidence="1" type="primary">rpmG</name>
    <name type="ordered locus">NTHI1123</name>
</gene>
<accession>Q4QLV7</accession>
<organism>
    <name type="scientific">Haemophilus influenzae (strain 86-028NP)</name>
    <dbReference type="NCBI Taxonomy" id="281310"/>
    <lineage>
        <taxon>Bacteria</taxon>
        <taxon>Pseudomonadati</taxon>
        <taxon>Pseudomonadota</taxon>
        <taxon>Gammaproteobacteria</taxon>
        <taxon>Pasteurellales</taxon>
        <taxon>Pasteurellaceae</taxon>
        <taxon>Haemophilus</taxon>
    </lineage>
</organism>
<keyword id="KW-0687">Ribonucleoprotein</keyword>
<keyword id="KW-0689">Ribosomal protein</keyword>